<gene>
    <name evidence="1" type="primary">khpB</name>
    <name evidence="1" type="synonym">eloR</name>
</gene>
<evidence type="ECO:0000255" key="1">
    <source>
        <dbReference type="HAMAP-Rule" id="MF_00867"/>
    </source>
</evidence>
<evidence type="ECO:0000269" key="2">
    <source ref="1"/>
</evidence>
<evidence type="ECO:0000312" key="3">
    <source>
        <dbReference type="PDB" id="3GKU"/>
    </source>
</evidence>
<evidence type="ECO:0007744" key="4">
    <source>
        <dbReference type="PDB" id="3GKU"/>
    </source>
</evidence>
<evidence type="ECO:0007829" key="5">
    <source>
        <dbReference type="PDB" id="3GKU"/>
    </source>
</evidence>
<reference evidence="3 4" key="1">
    <citation type="submission" date="2009-03" db="PDB data bank">
        <title>The crystal structure of a probable RNA-binding protein from Clostridium symbiosum ATCC 14940.</title>
        <authorList>
            <person name="Tan K."/>
            <person name="Keigher L."/>
            <person name="Jedrzejczak R."/>
            <person name="Babnigg G."/>
            <person name="Joachimiak A."/>
        </authorList>
    </citation>
    <scope>X-RAY CRYSTALLOGRAPHY (2.95 ANGSTROMS) OF 1-208</scope>
    <scope>SUBUNIT</scope>
    <scope>DOMAIN</scope>
</reference>
<feature type="chain" id="PRO_0000454541" description="RNA-binding protein KhpB">
    <location>
        <begin position="1"/>
        <end position="222"/>
    </location>
</feature>
<feature type="domain" description="KH" evidence="1">
    <location>
        <begin position="54"/>
        <end position="133"/>
    </location>
</feature>
<feature type="domain" description="R3H" evidence="1">
    <location>
        <begin position="138"/>
        <end position="204"/>
    </location>
</feature>
<feature type="region of interest" description="Jag_N domain" evidence="1">
    <location>
        <begin position="2"/>
        <end position="51"/>
    </location>
</feature>
<feature type="strand" evidence="5">
    <location>
        <begin position="4"/>
        <end position="10"/>
    </location>
</feature>
<feature type="helix" evidence="5">
    <location>
        <begin position="11"/>
        <end position="22"/>
    </location>
</feature>
<feature type="helix" evidence="5">
    <location>
        <begin position="26"/>
        <end position="28"/>
    </location>
</feature>
<feature type="strand" evidence="5">
    <location>
        <begin position="29"/>
        <end position="35"/>
    </location>
</feature>
<feature type="strand" evidence="5">
    <location>
        <begin position="49"/>
        <end position="55"/>
    </location>
</feature>
<feature type="helix" evidence="5">
    <location>
        <begin position="59"/>
        <end position="73"/>
    </location>
</feature>
<feature type="strand" evidence="5">
    <location>
        <begin position="79"/>
        <end position="85"/>
    </location>
</feature>
<feature type="turn" evidence="5">
    <location>
        <begin position="86"/>
        <end position="89"/>
    </location>
</feature>
<feature type="strand" evidence="5">
    <location>
        <begin position="90"/>
        <end position="96"/>
    </location>
</feature>
<feature type="helix" evidence="5">
    <location>
        <begin position="98"/>
        <end position="102"/>
    </location>
</feature>
<feature type="helix" evidence="5">
    <location>
        <begin position="107"/>
        <end position="124"/>
    </location>
</feature>
<feature type="strand" evidence="5">
    <location>
        <begin position="131"/>
        <end position="136"/>
    </location>
</feature>
<feature type="helix" evidence="5">
    <location>
        <begin position="139"/>
        <end position="161"/>
    </location>
</feature>
<feature type="helix" evidence="5">
    <location>
        <begin position="172"/>
        <end position="181"/>
    </location>
</feature>
<feature type="turn" evidence="5">
    <location>
        <begin position="182"/>
        <end position="184"/>
    </location>
</feature>
<feature type="strand" evidence="5">
    <location>
        <begin position="186"/>
        <end position="195"/>
    </location>
</feature>
<feature type="strand" evidence="5">
    <location>
        <begin position="200"/>
        <end position="205"/>
    </location>
</feature>
<accession>D0VX24</accession>
<keyword id="KW-0002">3D-structure</keyword>
<keyword id="KW-0133">Cell shape</keyword>
<keyword id="KW-0961">Cell wall biogenesis/degradation</keyword>
<keyword id="KW-0143">Chaperone</keyword>
<keyword id="KW-0963">Cytoplasm</keyword>
<keyword id="KW-0694">RNA-binding</keyword>
<dbReference type="PDB" id="3GKU">
    <property type="method" value="X-ray"/>
    <property type="resolution" value="2.95 A"/>
    <property type="chains" value="A/B/C=1-208"/>
</dbReference>
<dbReference type="PDBsum" id="3GKU"/>
<dbReference type="SMR" id="D0VX24"/>
<dbReference type="EvolutionaryTrace" id="D0VX24"/>
<dbReference type="GO" id="GO:0005737">
    <property type="term" value="C:cytoplasm"/>
    <property type="evidence" value="ECO:0007669"/>
    <property type="project" value="UniProtKB-SubCell"/>
</dbReference>
<dbReference type="GO" id="GO:0003723">
    <property type="term" value="F:RNA binding"/>
    <property type="evidence" value="ECO:0007669"/>
    <property type="project" value="UniProtKB-UniRule"/>
</dbReference>
<dbReference type="GO" id="GO:0071555">
    <property type="term" value="P:cell wall organization"/>
    <property type="evidence" value="ECO:0007669"/>
    <property type="project" value="UniProtKB-KW"/>
</dbReference>
<dbReference type="GO" id="GO:0009252">
    <property type="term" value="P:peptidoglycan biosynthetic process"/>
    <property type="evidence" value="ECO:0007669"/>
    <property type="project" value="UniProtKB-UniRule"/>
</dbReference>
<dbReference type="GO" id="GO:0008360">
    <property type="term" value="P:regulation of cell shape"/>
    <property type="evidence" value="ECO:0007669"/>
    <property type="project" value="UniProtKB-KW"/>
</dbReference>
<dbReference type="CDD" id="cd02414">
    <property type="entry name" value="KH-II_Jag"/>
    <property type="match status" value="1"/>
</dbReference>
<dbReference type="CDD" id="cd02644">
    <property type="entry name" value="R3H_jag"/>
    <property type="match status" value="1"/>
</dbReference>
<dbReference type="Gene3D" id="3.30.300.20">
    <property type="match status" value="1"/>
</dbReference>
<dbReference type="Gene3D" id="3.30.30.80">
    <property type="entry name" value="probable RNA-binding protein from clostridium symbiosum atcc 14940"/>
    <property type="match status" value="1"/>
</dbReference>
<dbReference type="Gene3D" id="3.30.1370.50">
    <property type="entry name" value="R3H-like domain"/>
    <property type="match status" value="1"/>
</dbReference>
<dbReference type="HAMAP" id="MF_00867">
    <property type="entry name" value="KhpB"/>
    <property type="match status" value="1"/>
</dbReference>
<dbReference type="InterPro" id="IPR038008">
    <property type="entry name" value="Jag_KH"/>
</dbReference>
<dbReference type="InterPro" id="IPR038247">
    <property type="entry name" value="Jag_N_dom_sf"/>
</dbReference>
<dbReference type="InterPro" id="IPR015946">
    <property type="entry name" value="KH_dom-like_a/b"/>
</dbReference>
<dbReference type="InterPro" id="IPR039247">
    <property type="entry name" value="KhpB"/>
</dbReference>
<dbReference type="InterPro" id="IPR032782">
    <property type="entry name" value="KhpB_N"/>
</dbReference>
<dbReference type="InterPro" id="IPR001374">
    <property type="entry name" value="R3H_dom"/>
</dbReference>
<dbReference type="InterPro" id="IPR036867">
    <property type="entry name" value="R3H_dom_sf"/>
</dbReference>
<dbReference type="InterPro" id="IPR034079">
    <property type="entry name" value="R3H_KhpB"/>
</dbReference>
<dbReference type="NCBIfam" id="NF041568">
    <property type="entry name" value="Jag_EloR"/>
    <property type="match status" value="1"/>
</dbReference>
<dbReference type="PANTHER" id="PTHR35800">
    <property type="entry name" value="PROTEIN JAG"/>
    <property type="match status" value="1"/>
</dbReference>
<dbReference type="PANTHER" id="PTHR35800:SF1">
    <property type="entry name" value="RNA-BINDING PROTEIN KHPB"/>
    <property type="match status" value="1"/>
</dbReference>
<dbReference type="Pfam" id="PF14804">
    <property type="entry name" value="Jag_N"/>
    <property type="match status" value="1"/>
</dbReference>
<dbReference type="Pfam" id="PF13083">
    <property type="entry name" value="KH_KhpA-B"/>
    <property type="match status" value="1"/>
</dbReference>
<dbReference type="Pfam" id="PF01424">
    <property type="entry name" value="R3H"/>
    <property type="match status" value="1"/>
</dbReference>
<dbReference type="SMART" id="SM01245">
    <property type="entry name" value="Jag_N"/>
    <property type="match status" value="1"/>
</dbReference>
<dbReference type="SMART" id="SM00393">
    <property type="entry name" value="R3H"/>
    <property type="match status" value="1"/>
</dbReference>
<dbReference type="SUPFAM" id="SSF82708">
    <property type="entry name" value="R3H domain"/>
    <property type="match status" value="1"/>
</dbReference>
<dbReference type="PROSITE" id="PS51061">
    <property type="entry name" value="R3H"/>
    <property type="match status" value="1"/>
</dbReference>
<sequence>MDMVTVTAKTVEEAVTKALIELQTTSDKLTYEIVEKGSAGFLGIGSKPAIIRAKRKETLQDKAIEFLEQVFDAMNMAVDISVEYNETEKEMNVNLKGDDMGILIGKRGQTLDSLQYLVSLVVNKSSSDYIRVKLDTENYRERRKETLETLAKNIAYKVKRTKRSVSLEPMNPYERRIIHAALQNDKYVVTRSDGEEPFRHVIISLKRENRRDRNDRSDRNEK</sequence>
<protein>
    <recommendedName>
        <fullName evidence="1">RNA-binding protein KhpB</fullName>
    </recommendedName>
    <alternativeName>
        <fullName evidence="1">RNA-binding protein EloR</fullName>
    </alternativeName>
</protein>
<name>KHPB_CLOSY</name>
<organism>
    <name type="scientific">Clostridium symbiosum</name>
    <name type="common">Bacteroides symbiosus</name>
    <dbReference type="NCBI Taxonomy" id="1512"/>
    <lineage>
        <taxon>Bacteria</taxon>
        <taxon>Bacillati</taxon>
        <taxon>Bacillota</taxon>
        <taxon>Clostridia</taxon>
        <taxon>Lachnospirales</taxon>
        <taxon>Lachnospiraceae</taxon>
    </lineage>
</organism>
<proteinExistence type="evidence at protein level"/>
<comment type="function">
    <text evidence="1">A probable RNA chaperone. Forms a complex with KhpA which binds to cellular RNA and controls its expression. Plays a role in peptidoglycan (PG) homeostasis and cell length regulation.</text>
</comment>
<comment type="subunit">
    <text evidence="1 2">Forms a complex with KhpA (By similarity). Homodimer or homotrimer (Ref.1).</text>
</comment>
<comment type="subcellular location">
    <subcellularLocation>
        <location evidence="1">Cytoplasm</location>
    </subcellularLocation>
</comment>
<comment type="domain">
    <text evidence="1">Has an N-terminal Jag-N domain and 2 RNA-binding domains (KH and R3H).</text>
</comment>
<comment type="similarity">
    <text evidence="1">Belongs to the KhpB RNA-binding protein family.</text>
</comment>